<organism>
    <name type="scientific">Vibrio parahaemolyticus serotype O3:K6 (strain RIMD 2210633)</name>
    <dbReference type="NCBI Taxonomy" id="223926"/>
    <lineage>
        <taxon>Bacteria</taxon>
        <taxon>Pseudomonadati</taxon>
        <taxon>Pseudomonadota</taxon>
        <taxon>Gammaproteobacteria</taxon>
        <taxon>Vibrionales</taxon>
        <taxon>Vibrionaceae</taxon>
        <taxon>Vibrio</taxon>
    </lineage>
</organism>
<reference key="1">
    <citation type="journal article" date="2003" name="Lancet">
        <title>Genome sequence of Vibrio parahaemolyticus: a pathogenic mechanism distinct from that of V. cholerae.</title>
        <authorList>
            <person name="Makino K."/>
            <person name="Oshima K."/>
            <person name="Kurokawa K."/>
            <person name="Yokoyama K."/>
            <person name="Uda T."/>
            <person name="Tagomori K."/>
            <person name="Iijima Y."/>
            <person name="Najima M."/>
            <person name="Nakano M."/>
            <person name="Yamashita A."/>
            <person name="Kubota Y."/>
            <person name="Kimura S."/>
            <person name="Yasunaga T."/>
            <person name="Honda T."/>
            <person name="Shinagawa H."/>
            <person name="Hattori M."/>
            <person name="Iida T."/>
        </authorList>
    </citation>
    <scope>NUCLEOTIDE SEQUENCE [LARGE SCALE GENOMIC DNA]</scope>
    <source>
        <strain>RIMD 2210633</strain>
    </source>
</reference>
<proteinExistence type="inferred from homology"/>
<keyword id="KW-0067">ATP-binding</keyword>
<keyword id="KW-0963">Cytoplasm</keyword>
<keyword id="KW-0275">Fatty acid biosynthesis</keyword>
<keyword id="KW-0276">Fatty acid metabolism</keyword>
<keyword id="KW-0444">Lipid biosynthesis</keyword>
<keyword id="KW-0443">Lipid metabolism</keyword>
<keyword id="KW-0547">Nucleotide-binding</keyword>
<keyword id="KW-0808">Transferase</keyword>
<comment type="function">
    <text evidence="1">Component of the acetyl coenzyme A carboxylase (ACC) complex. First, biotin carboxylase catalyzes the carboxylation of biotin on its carrier protein (BCCP) and then the CO(2) group is transferred by the carboxyltransferase to acetyl-CoA to form malonyl-CoA.</text>
</comment>
<comment type="catalytic activity">
    <reaction evidence="1">
        <text>N(6)-carboxybiotinyl-L-lysyl-[protein] + acetyl-CoA = N(6)-biotinyl-L-lysyl-[protein] + malonyl-CoA</text>
        <dbReference type="Rhea" id="RHEA:54728"/>
        <dbReference type="Rhea" id="RHEA-COMP:10505"/>
        <dbReference type="Rhea" id="RHEA-COMP:10506"/>
        <dbReference type="ChEBI" id="CHEBI:57288"/>
        <dbReference type="ChEBI" id="CHEBI:57384"/>
        <dbReference type="ChEBI" id="CHEBI:83144"/>
        <dbReference type="ChEBI" id="CHEBI:83145"/>
        <dbReference type="EC" id="2.1.3.15"/>
    </reaction>
</comment>
<comment type="pathway">
    <text evidence="1">Lipid metabolism; malonyl-CoA biosynthesis; malonyl-CoA from acetyl-CoA: step 1/1.</text>
</comment>
<comment type="subunit">
    <text evidence="1">Acetyl-CoA carboxylase is a heterohexamer composed of biotin carboxyl carrier protein (AccB), biotin carboxylase (AccC) and two subunits each of ACCase subunit alpha (AccA) and ACCase subunit beta (AccD).</text>
</comment>
<comment type="subcellular location">
    <subcellularLocation>
        <location evidence="1">Cytoplasm</location>
    </subcellularLocation>
</comment>
<comment type="similarity">
    <text evidence="1">Belongs to the AccA family.</text>
</comment>
<protein>
    <recommendedName>
        <fullName evidence="1">Acetyl-coenzyme A carboxylase carboxyl transferase subunit alpha</fullName>
        <shortName evidence="1">ACCase subunit alpha</shortName>
        <shortName evidence="1">Acetyl-CoA carboxylase carboxyltransferase subunit alpha</shortName>
        <ecNumber evidence="1">2.1.3.15</ecNumber>
    </recommendedName>
</protein>
<dbReference type="EC" id="2.1.3.15" evidence="1"/>
<dbReference type="EMBL" id="BA000031">
    <property type="protein sequence ID" value="BAC60565.1"/>
    <property type="molecule type" value="Genomic_DNA"/>
</dbReference>
<dbReference type="RefSeq" id="NP_798681.1">
    <property type="nucleotide sequence ID" value="NC_004603.1"/>
</dbReference>
<dbReference type="RefSeq" id="WP_005480969.1">
    <property type="nucleotide sequence ID" value="NC_004603.1"/>
</dbReference>
<dbReference type="SMR" id="Q87MF3"/>
<dbReference type="GeneID" id="1189815"/>
<dbReference type="KEGG" id="vpa:VP2302"/>
<dbReference type="PATRIC" id="fig|223926.6.peg.2204"/>
<dbReference type="eggNOG" id="COG0825">
    <property type="taxonomic scope" value="Bacteria"/>
</dbReference>
<dbReference type="HOGENOM" id="CLU_015486_0_2_6"/>
<dbReference type="UniPathway" id="UPA00655">
    <property type="reaction ID" value="UER00711"/>
</dbReference>
<dbReference type="Proteomes" id="UP000002493">
    <property type="component" value="Chromosome 1"/>
</dbReference>
<dbReference type="GO" id="GO:0009317">
    <property type="term" value="C:acetyl-CoA carboxylase complex"/>
    <property type="evidence" value="ECO:0007669"/>
    <property type="project" value="InterPro"/>
</dbReference>
<dbReference type="GO" id="GO:0003989">
    <property type="term" value="F:acetyl-CoA carboxylase activity"/>
    <property type="evidence" value="ECO:0007669"/>
    <property type="project" value="InterPro"/>
</dbReference>
<dbReference type="GO" id="GO:0005524">
    <property type="term" value="F:ATP binding"/>
    <property type="evidence" value="ECO:0007669"/>
    <property type="project" value="UniProtKB-KW"/>
</dbReference>
<dbReference type="GO" id="GO:0016743">
    <property type="term" value="F:carboxyl- or carbamoyltransferase activity"/>
    <property type="evidence" value="ECO:0007669"/>
    <property type="project" value="UniProtKB-UniRule"/>
</dbReference>
<dbReference type="GO" id="GO:0006633">
    <property type="term" value="P:fatty acid biosynthetic process"/>
    <property type="evidence" value="ECO:0007669"/>
    <property type="project" value="UniProtKB-KW"/>
</dbReference>
<dbReference type="GO" id="GO:2001295">
    <property type="term" value="P:malonyl-CoA biosynthetic process"/>
    <property type="evidence" value="ECO:0007669"/>
    <property type="project" value="UniProtKB-UniRule"/>
</dbReference>
<dbReference type="FunFam" id="3.90.226.10:FF:000008">
    <property type="entry name" value="Acetyl-coenzyme A carboxylase carboxyl transferase subunit alpha"/>
    <property type="match status" value="1"/>
</dbReference>
<dbReference type="Gene3D" id="3.90.226.10">
    <property type="entry name" value="2-enoyl-CoA Hydratase, Chain A, domain 1"/>
    <property type="match status" value="1"/>
</dbReference>
<dbReference type="HAMAP" id="MF_00823">
    <property type="entry name" value="AcetylCoA_CT_alpha"/>
    <property type="match status" value="1"/>
</dbReference>
<dbReference type="InterPro" id="IPR001095">
    <property type="entry name" value="Acetyl_CoA_COase_a_su"/>
</dbReference>
<dbReference type="InterPro" id="IPR029045">
    <property type="entry name" value="ClpP/crotonase-like_dom_sf"/>
</dbReference>
<dbReference type="InterPro" id="IPR011763">
    <property type="entry name" value="COA_CT_C"/>
</dbReference>
<dbReference type="NCBIfam" id="TIGR00513">
    <property type="entry name" value="accA"/>
    <property type="match status" value="1"/>
</dbReference>
<dbReference type="NCBIfam" id="NF041504">
    <property type="entry name" value="AccA_sub"/>
    <property type="match status" value="1"/>
</dbReference>
<dbReference type="NCBIfam" id="NF004344">
    <property type="entry name" value="PRK05724.1"/>
    <property type="match status" value="1"/>
</dbReference>
<dbReference type="PANTHER" id="PTHR42853">
    <property type="entry name" value="ACETYL-COENZYME A CARBOXYLASE CARBOXYL TRANSFERASE SUBUNIT ALPHA"/>
    <property type="match status" value="1"/>
</dbReference>
<dbReference type="PANTHER" id="PTHR42853:SF3">
    <property type="entry name" value="ACETYL-COENZYME A CARBOXYLASE CARBOXYL TRANSFERASE SUBUNIT ALPHA, CHLOROPLASTIC"/>
    <property type="match status" value="1"/>
</dbReference>
<dbReference type="Pfam" id="PF03255">
    <property type="entry name" value="ACCA"/>
    <property type="match status" value="1"/>
</dbReference>
<dbReference type="PRINTS" id="PR01069">
    <property type="entry name" value="ACCCTRFRASEA"/>
</dbReference>
<dbReference type="SUPFAM" id="SSF52096">
    <property type="entry name" value="ClpP/crotonase"/>
    <property type="match status" value="1"/>
</dbReference>
<dbReference type="PROSITE" id="PS50989">
    <property type="entry name" value="COA_CT_CTER"/>
    <property type="match status" value="1"/>
</dbReference>
<evidence type="ECO:0000255" key="1">
    <source>
        <dbReference type="HAMAP-Rule" id="MF_00823"/>
    </source>
</evidence>
<evidence type="ECO:0000255" key="2">
    <source>
        <dbReference type="PROSITE-ProRule" id="PRU01137"/>
    </source>
</evidence>
<name>ACCA_VIBPA</name>
<gene>
    <name evidence="1" type="primary">accA</name>
    <name type="ordered locus">VP2302</name>
</gene>
<feature type="chain" id="PRO_0000223849" description="Acetyl-coenzyme A carboxylase carboxyl transferase subunit alpha">
    <location>
        <begin position="1"/>
        <end position="319"/>
    </location>
</feature>
<feature type="domain" description="CoA carboxyltransferase C-terminal" evidence="2">
    <location>
        <begin position="35"/>
        <end position="296"/>
    </location>
</feature>
<accession>Q87MF3</accession>
<sequence length="319" mass="35699">MSLNFLEFEKPIAELEAKIEALRDVSRHGGDSAIDLDKEIEQLEKKSLELKKKIFSDLGAWETAQLARHPLRPYTLDYVQHVFEEFDELAGDRAFADDKAIVGGIARLEGRPVMIIGHQKGRETKEKVRRNFGMPKPEGYRKALRLMEMAERFNMPIITFIDTAGAYPGVGAEERGQSEAIAKNLKVMSGLKVPVICNVVGEGGSGGALAIGVGDYVNMLQYSTYSVISPEGCASILWRDSDKAPQAAEAMGLTAPRLKELELIDEIIEEPLGGAHRDHVKMAENMKATLLRQLEDLEQLDEESLRERRYQRLMNYGYC</sequence>